<evidence type="ECO:0000255" key="1">
    <source>
        <dbReference type="HAMAP-Rule" id="MF_00847"/>
    </source>
</evidence>
<evidence type="ECO:0000305" key="2"/>
<sequence>MSSQFVYTMHRVGKVVPPKRHILKDISLSFFPGAKIGVLGLNGAGKSTLLRIMAGVDKEFEGEARPQPGIKIGYLPQEPKLEPQQTVREAVEEAVSEVKNALTRLDEVYALYADPDADFDKLAAEQANLEAIIQAHDGHNLDNQLERAADALRLPDWDAKIEHLSGGERRRVALCRLLLEKPDMLLLDEPTNHLDAESVAWLERFLHDYEGTVVAITHDRYFLDNVAGWILELDRGEGIPWEGNYSSWLEQKEKRLEQEQATENARQKSIAKELEWVRQNPKGRQAKSKARMARFDELNSGEYQKRNETNELFIPPGPRLGDKVIEVQNLTKSYGDRTLIDDLSFSIPKGAIVGIIGANGAGKSTLFRMLSGQEQPDSGSVTMGETVVLASVDQFRDSMDDKKTVWEEVSNGQDILTIGNFEIPSRAYVGRFNFKGVDQQKRVGELSGGERGRLHLAKLLQRGGNVLLLDEPTNDLDVETLRALENAILEFPGCAMVISHDRWFLDRIATHILDYGDEGKVTFYEGNFSDYEEWKKKTLGDAATQPHRIKYKRIAK</sequence>
<organism>
    <name type="scientific">Haemophilus influenzae (strain ATCC 51907 / DSM 11121 / KW20 / Rd)</name>
    <dbReference type="NCBI Taxonomy" id="71421"/>
    <lineage>
        <taxon>Bacteria</taxon>
        <taxon>Pseudomonadati</taxon>
        <taxon>Pseudomonadota</taxon>
        <taxon>Gammaproteobacteria</taxon>
        <taxon>Pasteurellales</taxon>
        <taxon>Pasteurellaceae</taxon>
        <taxon>Haemophilus</taxon>
    </lineage>
</organism>
<name>ETTA_HAEIN</name>
<dbReference type="EC" id="3.6.1.-" evidence="1"/>
<dbReference type="EMBL" id="L42023">
    <property type="protein sequence ID" value="AAC22902.1"/>
    <property type="molecule type" value="Genomic_DNA"/>
</dbReference>
<dbReference type="PIR" id="G64169">
    <property type="entry name" value="G64169"/>
</dbReference>
<dbReference type="RefSeq" id="NP_439408.1">
    <property type="nucleotide sequence ID" value="NC_000907.1"/>
</dbReference>
<dbReference type="SMR" id="P45127"/>
<dbReference type="STRING" id="71421.HI_1252"/>
<dbReference type="EnsemblBacteria" id="AAC22902">
    <property type="protein sequence ID" value="AAC22902"/>
    <property type="gene ID" value="HI_1252"/>
</dbReference>
<dbReference type="KEGG" id="hin:HI_1252"/>
<dbReference type="PATRIC" id="fig|71421.8.peg.1304"/>
<dbReference type="eggNOG" id="COG0488">
    <property type="taxonomic scope" value="Bacteria"/>
</dbReference>
<dbReference type="HOGENOM" id="CLU_000604_36_0_6"/>
<dbReference type="OrthoDB" id="9762051at2"/>
<dbReference type="PhylomeDB" id="P45127"/>
<dbReference type="BioCyc" id="HINF71421:G1GJ1-1283-MONOMER"/>
<dbReference type="Proteomes" id="UP000000579">
    <property type="component" value="Chromosome"/>
</dbReference>
<dbReference type="GO" id="GO:0005737">
    <property type="term" value="C:cytoplasm"/>
    <property type="evidence" value="ECO:0007669"/>
    <property type="project" value="UniProtKB-SubCell"/>
</dbReference>
<dbReference type="GO" id="GO:0005524">
    <property type="term" value="F:ATP binding"/>
    <property type="evidence" value="ECO:0007669"/>
    <property type="project" value="UniProtKB-UniRule"/>
</dbReference>
<dbReference type="GO" id="GO:0016887">
    <property type="term" value="F:ATP hydrolysis activity"/>
    <property type="evidence" value="ECO:0007669"/>
    <property type="project" value="UniProtKB-UniRule"/>
</dbReference>
<dbReference type="GO" id="GO:0043022">
    <property type="term" value="F:ribosome binding"/>
    <property type="evidence" value="ECO:0007669"/>
    <property type="project" value="UniProtKB-UniRule"/>
</dbReference>
<dbReference type="GO" id="GO:0019843">
    <property type="term" value="F:rRNA binding"/>
    <property type="evidence" value="ECO:0007669"/>
    <property type="project" value="UniProtKB-UniRule"/>
</dbReference>
<dbReference type="GO" id="GO:0000049">
    <property type="term" value="F:tRNA binding"/>
    <property type="evidence" value="ECO:0007669"/>
    <property type="project" value="UniProtKB-UniRule"/>
</dbReference>
<dbReference type="GO" id="GO:0045900">
    <property type="term" value="P:negative regulation of translational elongation"/>
    <property type="evidence" value="ECO:0007669"/>
    <property type="project" value="UniProtKB-UniRule"/>
</dbReference>
<dbReference type="GO" id="GO:0006412">
    <property type="term" value="P:translation"/>
    <property type="evidence" value="ECO:0007669"/>
    <property type="project" value="UniProtKB-KW"/>
</dbReference>
<dbReference type="CDD" id="cd03221">
    <property type="entry name" value="ABCF_EF-3"/>
    <property type="match status" value="2"/>
</dbReference>
<dbReference type="FunFam" id="3.40.50.300:FF:000183">
    <property type="entry name" value="ABC transporter ATP-binding protein yjjK"/>
    <property type="match status" value="1"/>
</dbReference>
<dbReference type="FunFam" id="3.40.50.300:FF:000011">
    <property type="entry name" value="Putative ABC transporter ATP-binding component"/>
    <property type="match status" value="1"/>
</dbReference>
<dbReference type="Gene3D" id="3.40.50.300">
    <property type="entry name" value="P-loop containing nucleotide triphosphate hydrolases"/>
    <property type="match status" value="2"/>
</dbReference>
<dbReference type="HAMAP" id="MF_00847">
    <property type="entry name" value="EttA"/>
    <property type="match status" value="1"/>
</dbReference>
<dbReference type="InterPro" id="IPR003593">
    <property type="entry name" value="AAA+_ATPase"/>
</dbReference>
<dbReference type="InterPro" id="IPR032781">
    <property type="entry name" value="ABC_tran_Xtn"/>
</dbReference>
<dbReference type="InterPro" id="IPR003439">
    <property type="entry name" value="ABC_transporter-like_ATP-bd"/>
</dbReference>
<dbReference type="InterPro" id="IPR017871">
    <property type="entry name" value="ABC_transporter-like_CS"/>
</dbReference>
<dbReference type="InterPro" id="IPR022374">
    <property type="entry name" value="EttA"/>
</dbReference>
<dbReference type="InterPro" id="IPR027417">
    <property type="entry name" value="P-loop_NTPase"/>
</dbReference>
<dbReference type="NCBIfam" id="TIGR03719">
    <property type="entry name" value="ABC_ABC_ChvD"/>
    <property type="match status" value="1"/>
</dbReference>
<dbReference type="NCBIfam" id="NF008775">
    <property type="entry name" value="PRK11819.1"/>
    <property type="match status" value="1"/>
</dbReference>
<dbReference type="PANTHER" id="PTHR43858:SF1">
    <property type="entry name" value="ABC TRANSPORTER-RELATED PROTEIN"/>
    <property type="match status" value="1"/>
</dbReference>
<dbReference type="PANTHER" id="PTHR43858">
    <property type="entry name" value="ENERGY-DEPENDENT TRANSLATIONAL THROTTLE PROTEIN ETTA"/>
    <property type="match status" value="1"/>
</dbReference>
<dbReference type="Pfam" id="PF00005">
    <property type="entry name" value="ABC_tran"/>
    <property type="match status" value="2"/>
</dbReference>
<dbReference type="Pfam" id="PF12848">
    <property type="entry name" value="ABC_tran_Xtn"/>
    <property type="match status" value="1"/>
</dbReference>
<dbReference type="SMART" id="SM00382">
    <property type="entry name" value="AAA"/>
    <property type="match status" value="2"/>
</dbReference>
<dbReference type="SUPFAM" id="SSF52540">
    <property type="entry name" value="P-loop containing nucleoside triphosphate hydrolases"/>
    <property type="match status" value="2"/>
</dbReference>
<dbReference type="PROSITE" id="PS00211">
    <property type="entry name" value="ABC_TRANSPORTER_1"/>
    <property type="match status" value="1"/>
</dbReference>
<dbReference type="PROSITE" id="PS50893">
    <property type="entry name" value="ABC_TRANSPORTER_2"/>
    <property type="match status" value="2"/>
</dbReference>
<comment type="function">
    <text evidence="1">A translation factor that gates the progression of the 70S ribosomal initiation complex (IC, containing tRNA(fMet) in the P-site) into the translation elongation cycle by using a mechanism sensitive to the ATP/ADP ratio. Binds to the 70S ribosome E-site where it modulates the state of the translating ribosome during subunit translocation. ATP hydrolysis probably frees it from the ribosome, which can enter the elongation phase.</text>
</comment>
<comment type="catalytic activity">
    <reaction evidence="1">
        <text>ATP + H2O = ADP + phosphate + H(+)</text>
        <dbReference type="Rhea" id="RHEA:13065"/>
        <dbReference type="ChEBI" id="CHEBI:15377"/>
        <dbReference type="ChEBI" id="CHEBI:15378"/>
        <dbReference type="ChEBI" id="CHEBI:30616"/>
        <dbReference type="ChEBI" id="CHEBI:43474"/>
        <dbReference type="ChEBI" id="CHEBI:456216"/>
    </reaction>
</comment>
<comment type="subunit">
    <text evidence="1">Monomer. Probably contacts ribosomal proteins L1, L5, L33 and S7, the 16S and 23S rRNA and the P-site containing tRNA(fMet).</text>
</comment>
<comment type="subcellular location">
    <subcellularLocation>
        <location evidence="1">Cytoplasm</location>
    </subcellularLocation>
    <text evidence="1">Associates with ribosomes and polysomes.</text>
</comment>
<comment type="domain">
    <text evidence="1">The arm domain is inserted in the first ABC transporter domain. Probably contacts ribosomal protein L1.</text>
</comment>
<comment type="domain">
    <text evidence="1">The P-site tRNA interaction motif (PtIM domain) probably interacts with the P-site tRNA(fMet) as well as the 23S rRNA.</text>
</comment>
<comment type="similarity">
    <text evidence="1 2">Belongs to the ABC transporter superfamily. ABCF family. Translational throttle EttA subfamily.</text>
</comment>
<feature type="chain" id="PRO_0000093194" description="Energy-dependent translational throttle protein EttA">
    <location>
        <begin position="1"/>
        <end position="556"/>
    </location>
</feature>
<feature type="domain" description="ABC transporter 1" evidence="1">
    <location>
        <begin position="7"/>
        <end position="260"/>
    </location>
</feature>
<feature type="domain" description="ABC transporter 2" evidence="1">
    <location>
        <begin position="325"/>
        <end position="551"/>
    </location>
</feature>
<feature type="region of interest" description="Arm" evidence="1">
    <location>
        <begin position="96"/>
        <end position="140"/>
    </location>
</feature>
<feature type="region of interest" description="PtIM" evidence="1">
    <location>
        <begin position="243"/>
        <end position="323"/>
    </location>
</feature>
<feature type="binding site" evidence="1">
    <location>
        <begin position="40"/>
        <end position="47"/>
    </location>
    <ligand>
        <name>ATP</name>
        <dbReference type="ChEBI" id="CHEBI:30616"/>
        <label>1</label>
    </ligand>
</feature>
<feature type="binding site" evidence="1">
    <location>
        <begin position="357"/>
        <end position="364"/>
    </location>
    <ligand>
        <name>ATP</name>
        <dbReference type="ChEBI" id="CHEBI:30616"/>
        <label>2</label>
    </ligand>
</feature>
<accession>P45127</accession>
<reference key="1">
    <citation type="journal article" date="1995" name="Science">
        <title>Whole-genome random sequencing and assembly of Haemophilus influenzae Rd.</title>
        <authorList>
            <person name="Fleischmann R.D."/>
            <person name="Adams M.D."/>
            <person name="White O."/>
            <person name="Clayton R.A."/>
            <person name="Kirkness E.F."/>
            <person name="Kerlavage A.R."/>
            <person name="Bult C.J."/>
            <person name="Tomb J.-F."/>
            <person name="Dougherty B.A."/>
            <person name="Merrick J.M."/>
            <person name="McKenney K."/>
            <person name="Sutton G.G."/>
            <person name="FitzHugh W."/>
            <person name="Fields C.A."/>
            <person name="Gocayne J.D."/>
            <person name="Scott J.D."/>
            <person name="Shirley R."/>
            <person name="Liu L.-I."/>
            <person name="Glodek A."/>
            <person name="Kelley J.M."/>
            <person name="Weidman J.F."/>
            <person name="Phillips C.A."/>
            <person name="Spriggs T."/>
            <person name="Hedblom E."/>
            <person name="Cotton M.D."/>
            <person name="Utterback T.R."/>
            <person name="Hanna M.C."/>
            <person name="Nguyen D.T."/>
            <person name="Saudek D.M."/>
            <person name="Brandon R.C."/>
            <person name="Fine L.D."/>
            <person name="Fritchman J.L."/>
            <person name="Fuhrmann J.L."/>
            <person name="Geoghagen N.S.M."/>
            <person name="Gnehm C.L."/>
            <person name="McDonald L.A."/>
            <person name="Small K.V."/>
            <person name="Fraser C.M."/>
            <person name="Smith H.O."/>
            <person name="Venter J.C."/>
        </authorList>
    </citation>
    <scope>NUCLEOTIDE SEQUENCE [LARGE SCALE GENOMIC DNA]</scope>
    <source>
        <strain>ATCC 51907 / DSM 11121 / KW20 / Rd</strain>
    </source>
</reference>
<reference key="2">
    <citation type="journal article" date="2000" name="Electrophoresis">
        <title>Two-dimensional map of the proteome of Haemophilus influenzae.</title>
        <authorList>
            <person name="Langen H."/>
            <person name="Takacs B."/>
            <person name="Evers S."/>
            <person name="Berndt P."/>
            <person name="Lahm H.W."/>
            <person name="Wipf B."/>
            <person name="Gray C."/>
            <person name="Fountoulakis M."/>
        </authorList>
    </citation>
    <scope>IDENTIFICATION BY MASS SPECTROMETRY</scope>
    <source>
        <strain>ATCC 51907 / DSM 11121 / KW20 / Rd</strain>
    </source>
</reference>
<gene>
    <name evidence="1" type="primary">ettA</name>
    <name type="ordered locus">HI_1252</name>
</gene>
<keyword id="KW-0067">ATP-binding</keyword>
<keyword id="KW-0963">Cytoplasm</keyword>
<keyword id="KW-0378">Hydrolase</keyword>
<keyword id="KW-0547">Nucleotide-binding</keyword>
<keyword id="KW-0648">Protein biosynthesis</keyword>
<keyword id="KW-1185">Reference proteome</keyword>
<keyword id="KW-0677">Repeat</keyword>
<keyword id="KW-0694">RNA-binding</keyword>
<keyword id="KW-0699">rRNA-binding</keyword>
<keyword id="KW-0810">Translation regulation</keyword>
<keyword id="KW-0820">tRNA-binding</keyword>
<protein>
    <recommendedName>
        <fullName evidence="1">Energy-dependent translational throttle protein EttA</fullName>
        <ecNumber evidence="1">3.6.1.-</ecNumber>
    </recommendedName>
    <alternativeName>
        <fullName evidence="1">Translational regulatory factor EttA</fullName>
    </alternativeName>
</protein>
<proteinExistence type="evidence at protein level"/>